<proteinExistence type="inferred from homology"/>
<feature type="chain" id="PRO_1000007430" description="Large ribosomal subunit protein uL29">
    <location>
        <begin position="1"/>
        <end position="66"/>
    </location>
</feature>
<accession>A5VQZ8</accession>
<gene>
    <name evidence="1" type="primary">rpmC</name>
    <name type="ordered locus">BOV_1188</name>
</gene>
<sequence length="66" mass="7512">MKAADVRAKSLDQLNDELGTLKKEQFNLRFQKATGQLEKTARVKQVRRDIARIKTIARQKAAESKA</sequence>
<reference key="1">
    <citation type="journal article" date="2009" name="PLoS ONE">
        <title>Genome degradation in Brucella ovis corresponds with narrowing of its host range and tissue tropism.</title>
        <authorList>
            <person name="Tsolis R.M."/>
            <person name="Seshadri R."/>
            <person name="Santos R.L."/>
            <person name="Sangari F.J."/>
            <person name="Lobo J.M."/>
            <person name="de Jong M.F."/>
            <person name="Ren Q."/>
            <person name="Myers G."/>
            <person name="Brinkac L.M."/>
            <person name="Nelson W.C."/>
            <person name="Deboy R.T."/>
            <person name="Angiuoli S."/>
            <person name="Khouri H."/>
            <person name="Dimitrov G."/>
            <person name="Robinson J.R."/>
            <person name="Mulligan S."/>
            <person name="Walker R.L."/>
            <person name="Elzer P.E."/>
            <person name="Hassan K.A."/>
            <person name="Paulsen I.T."/>
        </authorList>
    </citation>
    <scope>NUCLEOTIDE SEQUENCE [LARGE SCALE GENOMIC DNA]</scope>
    <source>
        <strain>ATCC 25840 / 63/290 / NCTC 10512</strain>
    </source>
</reference>
<name>RL29_BRUO2</name>
<keyword id="KW-0687">Ribonucleoprotein</keyword>
<keyword id="KW-0689">Ribosomal protein</keyword>
<evidence type="ECO:0000255" key="1">
    <source>
        <dbReference type="HAMAP-Rule" id="MF_00374"/>
    </source>
</evidence>
<evidence type="ECO:0000305" key="2"/>
<organism>
    <name type="scientific">Brucella ovis (strain ATCC 25840 / 63/290 / NCTC 10512)</name>
    <dbReference type="NCBI Taxonomy" id="444178"/>
    <lineage>
        <taxon>Bacteria</taxon>
        <taxon>Pseudomonadati</taxon>
        <taxon>Pseudomonadota</taxon>
        <taxon>Alphaproteobacteria</taxon>
        <taxon>Hyphomicrobiales</taxon>
        <taxon>Brucellaceae</taxon>
        <taxon>Brucella/Ochrobactrum group</taxon>
        <taxon>Brucella</taxon>
    </lineage>
</organism>
<dbReference type="EMBL" id="CP000708">
    <property type="protein sequence ID" value="ABQ61440.1"/>
    <property type="molecule type" value="Genomic_DNA"/>
</dbReference>
<dbReference type="RefSeq" id="WP_002964354.1">
    <property type="nucleotide sequence ID" value="NC_009505.1"/>
</dbReference>
<dbReference type="SMR" id="A5VQZ8"/>
<dbReference type="GeneID" id="97533532"/>
<dbReference type="KEGG" id="bov:BOV_1188"/>
<dbReference type="HOGENOM" id="CLU_158491_1_0_5"/>
<dbReference type="Proteomes" id="UP000006383">
    <property type="component" value="Chromosome I"/>
</dbReference>
<dbReference type="GO" id="GO:0022625">
    <property type="term" value="C:cytosolic large ribosomal subunit"/>
    <property type="evidence" value="ECO:0007669"/>
    <property type="project" value="TreeGrafter"/>
</dbReference>
<dbReference type="GO" id="GO:0003735">
    <property type="term" value="F:structural constituent of ribosome"/>
    <property type="evidence" value="ECO:0007669"/>
    <property type="project" value="InterPro"/>
</dbReference>
<dbReference type="GO" id="GO:0006412">
    <property type="term" value="P:translation"/>
    <property type="evidence" value="ECO:0007669"/>
    <property type="project" value="UniProtKB-UniRule"/>
</dbReference>
<dbReference type="CDD" id="cd00427">
    <property type="entry name" value="Ribosomal_L29_HIP"/>
    <property type="match status" value="1"/>
</dbReference>
<dbReference type="FunFam" id="1.10.287.310:FF:000001">
    <property type="entry name" value="50S ribosomal protein L29"/>
    <property type="match status" value="1"/>
</dbReference>
<dbReference type="Gene3D" id="1.10.287.310">
    <property type="match status" value="1"/>
</dbReference>
<dbReference type="HAMAP" id="MF_00374">
    <property type="entry name" value="Ribosomal_uL29"/>
    <property type="match status" value="1"/>
</dbReference>
<dbReference type="InterPro" id="IPR050063">
    <property type="entry name" value="Ribosomal_protein_uL29"/>
</dbReference>
<dbReference type="InterPro" id="IPR001854">
    <property type="entry name" value="Ribosomal_uL29"/>
</dbReference>
<dbReference type="InterPro" id="IPR018254">
    <property type="entry name" value="Ribosomal_uL29_CS"/>
</dbReference>
<dbReference type="InterPro" id="IPR036049">
    <property type="entry name" value="Ribosomal_uL29_sf"/>
</dbReference>
<dbReference type="NCBIfam" id="TIGR00012">
    <property type="entry name" value="L29"/>
    <property type="match status" value="1"/>
</dbReference>
<dbReference type="PANTHER" id="PTHR10916">
    <property type="entry name" value="60S RIBOSOMAL PROTEIN L35/50S RIBOSOMAL PROTEIN L29"/>
    <property type="match status" value="1"/>
</dbReference>
<dbReference type="PANTHER" id="PTHR10916:SF0">
    <property type="entry name" value="LARGE RIBOSOMAL SUBUNIT PROTEIN UL29C"/>
    <property type="match status" value="1"/>
</dbReference>
<dbReference type="Pfam" id="PF00831">
    <property type="entry name" value="Ribosomal_L29"/>
    <property type="match status" value="1"/>
</dbReference>
<dbReference type="SUPFAM" id="SSF46561">
    <property type="entry name" value="Ribosomal protein L29 (L29p)"/>
    <property type="match status" value="1"/>
</dbReference>
<dbReference type="PROSITE" id="PS00579">
    <property type="entry name" value="RIBOSOMAL_L29"/>
    <property type="match status" value="1"/>
</dbReference>
<comment type="similarity">
    <text evidence="1">Belongs to the universal ribosomal protein uL29 family.</text>
</comment>
<protein>
    <recommendedName>
        <fullName evidence="1">Large ribosomal subunit protein uL29</fullName>
    </recommendedName>
    <alternativeName>
        <fullName evidence="2">50S ribosomal protein L29</fullName>
    </alternativeName>
</protein>